<organism>
    <name type="scientific">Aliivibrio fischeri (strain ATCC 700601 / ES114)</name>
    <name type="common">Vibrio fischeri</name>
    <dbReference type="NCBI Taxonomy" id="312309"/>
    <lineage>
        <taxon>Bacteria</taxon>
        <taxon>Pseudomonadati</taxon>
        <taxon>Pseudomonadota</taxon>
        <taxon>Gammaproteobacteria</taxon>
        <taxon>Vibrionales</taxon>
        <taxon>Vibrionaceae</taxon>
        <taxon>Aliivibrio</taxon>
    </lineage>
</organism>
<dbReference type="EMBL" id="CP000020">
    <property type="protein sequence ID" value="AAW84725.1"/>
    <property type="molecule type" value="Genomic_DNA"/>
</dbReference>
<dbReference type="RefSeq" id="WP_005417208.1">
    <property type="nucleotide sequence ID" value="NZ_CAWLES010000001.1"/>
</dbReference>
<dbReference type="RefSeq" id="YP_203613.1">
    <property type="nucleotide sequence ID" value="NC_006840.2"/>
</dbReference>
<dbReference type="SMR" id="Q5E8C1"/>
<dbReference type="STRING" id="312309.VF_0230"/>
<dbReference type="EnsemblBacteria" id="AAW84725">
    <property type="protein sequence ID" value="AAW84725"/>
    <property type="gene ID" value="VF_0230"/>
</dbReference>
<dbReference type="GeneID" id="56276751"/>
<dbReference type="KEGG" id="vfi:VF_0230"/>
<dbReference type="PATRIC" id="fig|312309.11.peg.227"/>
<dbReference type="eggNOG" id="COG0048">
    <property type="taxonomic scope" value="Bacteria"/>
</dbReference>
<dbReference type="HOGENOM" id="CLU_104295_1_2_6"/>
<dbReference type="OrthoDB" id="9802366at2"/>
<dbReference type="PRO" id="PR:Q5E8C1"/>
<dbReference type="Proteomes" id="UP000000537">
    <property type="component" value="Chromosome I"/>
</dbReference>
<dbReference type="GO" id="GO:0015935">
    <property type="term" value="C:small ribosomal subunit"/>
    <property type="evidence" value="ECO:0007669"/>
    <property type="project" value="InterPro"/>
</dbReference>
<dbReference type="GO" id="GO:0019843">
    <property type="term" value="F:rRNA binding"/>
    <property type="evidence" value="ECO:0007669"/>
    <property type="project" value="UniProtKB-UniRule"/>
</dbReference>
<dbReference type="GO" id="GO:0003735">
    <property type="term" value="F:structural constituent of ribosome"/>
    <property type="evidence" value="ECO:0007669"/>
    <property type="project" value="InterPro"/>
</dbReference>
<dbReference type="GO" id="GO:0000049">
    <property type="term" value="F:tRNA binding"/>
    <property type="evidence" value="ECO:0007669"/>
    <property type="project" value="UniProtKB-UniRule"/>
</dbReference>
<dbReference type="GO" id="GO:0006412">
    <property type="term" value="P:translation"/>
    <property type="evidence" value="ECO:0007669"/>
    <property type="project" value="UniProtKB-UniRule"/>
</dbReference>
<dbReference type="CDD" id="cd03368">
    <property type="entry name" value="Ribosomal_S12"/>
    <property type="match status" value="1"/>
</dbReference>
<dbReference type="FunFam" id="2.40.50.140:FF:000001">
    <property type="entry name" value="30S ribosomal protein S12"/>
    <property type="match status" value="1"/>
</dbReference>
<dbReference type="Gene3D" id="2.40.50.140">
    <property type="entry name" value="Nucleic acid-binding proteins"/>
    <property type="match status" value="1"/>
</dbReference>
<dbReference type="HAMAP" id="MF_00403_B">
    <property type="entry name" value="Ribosomal_uS12_B"/>
    <property type="match status" value="1"/>
</dbReference>
<dbReference type="InterPro" id="IPR012340">
    <property type="entry name" value="NA-bd_OB-fold"/>
</dbReference>
<dbReference type="InterPro" id="IPR006032">
    <property type="entry name" value="Ribosomal_uS12"/>
</dbReference>
<dbReference type="InterPro" id="IPR005679">
    <property type="entry name" value="Ribosomal_uS12_bac"/>
</dbReference>
<dbReference type="NCBIfam" id="TIGR00981">
    <property type="entry name" value="rpsL_bact"/>
    <property type="match status" value="1"/>
</dbReference>
<dbReference type="PANTHER" id="PTHR11652">
    <property type="entry name" value="30S RIBOSOMAL PROTEIN S12 FAMILY MEMBER"/>
    <property type="match status" value="1"/>
</dbReference>
<dbReference type="Pfam" id="PF00164">
    <property type="entry name" value="Ribosom_S12_S23"/>
    <property type="match status" value="1"/>
</dbReference>
<dbReference type="PIRSF" id="PIRSF002133">
    <property type="entry name" value="Ribosomal_S12/S23"/>
    <property type="match status" value="1"/>
</dbReference>
<dbReference type="PRINTS" id="PR01034">
    <property type="entry name" value="RIBOSOMALS12"/>
</dbReference>
<dbReference type="SUPFAM" id="SSF50249">
    <property type="entry name" value="Nucleic acid-binding proteins"/>
    <property type="match status" value="1"/>
</dbReference>
<dbReference type="PROSITE" id="PS00055">
    <property type="entry name" value="RIBOSOMAL_S12"/>
    <property type="match status" value="1"/>
</dbReference>
<proteinExistence type="inferred from homology"/>
<gene>
    <name evidence="2" type="primary">rpsL</name>
    <name type="ordered locus">VF_0230</name>
</gene>
<sequence>MATINQLVRKPRAKQVVKSNVPALEACPQKRGVCTRVYTTTPKKPNSALRKVCRVRLTNGFEVTSYIGGEGHNLQEHSVVLIRGGRVKDLPGVRYHTVRGALDCAGVNDRKKGRSKYGVKRPKS</sequence>
<name>RS12_ALIF1</name>
<comment type="function">
    <text evidence="2">With S4 and S5 plays an important role in translational accuracy.</text>
</comment>
<comment type="function">
    <text evidence="2">Interacts with and stabilizes bases of the 16S rRNA that are involved in tRNA selection in the A site and with the mRNA backbone. Located at the interface of the 30S and 50S subunits, it traverses the body of the 30S subunit contacting proteins on the other side and probably holding the rRNA structure together. The combined cluster of proteins S8, S12 and S17 appears to hold together the shoulder and platform of the 30S subunit.</text>
</comment>
<comment type="subunit">
    <text evidence="2">Part of the 30S ribosomal subunit. Contacts proteins S8 and S17. May interact with IF1 in the 30S initiation complex.</text>
</comment>
<comment type="similarity">
    <text evidence="2">Belongs to the universal ribosomal protein uS12 family.</text>
</comment>
<evidence type="ECO:0000250" key="1"/>
<evidence type="ECO:0000255" key="2">
    <source>
        <dbReference type="HAMAP-Rule" id="MF_00403"/>
    </source>
</evidence>
<evidence type="ECO:0000305" key="3"/>
<accession>Q5E8C1</accession>
<keyword id="KW-0488">Methylation</keyword>
<keyword id="KW-1185">Reference proteome</keyword>
<keyword id="KW-0687">Ribonucleoprotein</keyword>
<keyword id="KW-0689">Ribosomal protein</keyword>
<keyword id="KW-0694">RNA-binding</keyword>
<keyword id="KW-0699">rRNA-binding</keyword>
<keyword id="KW-0820">tRNA-binding</keyword>
<protein>
    <recommendedName>
        <fullName evidence="2">Small ribosomal subunit protein uS12</fullName>
    </recommendedName>
    <alternativeName>
        <fullName evidence="3">30S ribosomal protein S12</fullName>
    </alternativeName>
</protein>
<reference key="1">
    <citation type="journal article" date="2005" name="Proc. Natl. Acad. Sci. U.S.A.">
        <title>Complete genome sequence of Vibrio fischeri: a symbiotic bacterium with pathogenic congeners.</title>
        <authorList>
            <person name="Ruby E.G."/>
            <person name="Urbanowski M."/>
            <person name="Campbell J."/>
            <person name="Dunn A."/>
            <person name="Faini M."/>
            <person name="Gunsalus R."/>
            <person name="Lostroh P."/>
            <person name="Lupp C."/>
            <person name="McCann J."/>
            <person name="Millikan D."/>
            <person name="Schaefer A."/>
            <person name="Stabb E."/>
            <person name="Stevens A."/>
            <person name="Visick K."/>
            <person name="Whistler C."/>
            <person name="Greenberg E.P."/>
        </authorList>
    </citation>
    <scope>NUCLEOTIDE SEQUENCE [LARGE SCALE GENOMIC DNA]</scope>
    <source>
        <strain>ATCC 700601 / ES114</strain>
    </source>
</reference>
<feature type="chain" id="PRO_0000226422" description="Small ribosomal subunit protein uS12">
    <location>
        <begin position="1"/>
        <end position="124"/>
    </location>
</feature>
<feature type="modified residue" description="3-methylthioaspartic acid" evidence="1">
    <location>
        <position position="89"/>
    </location>
</feature>